<keyword id="KW-0227">DNA damage</keyword>
<keyword id="KW-0234">DNA repair</keyword>
<keyword id="KW-0255">Endonuclease</keyword>
<keyword id="KW-0378">Hydrolase</keyword>
<keyword id="KW-0479">Metal-binding</keyword>
<keyword id="KW-0540">Nuclease</keyword>
<keyword id="KW-0862">Zinc</keyword>
<proteinExistence type="inferred from homology"/>
<reference key="1">
    <citation type="journal article" date="2009" name="PLoS ONE">
        <title>Salmonella paratyphi C: genetic divergence from Salmonella choleraesuis and pathogenic convergence with Salmonella typhi.</title>
        <authorList>
            <person name="Liu W.-Q."/>
            <person name="Feng Y."/>
            <person name="Wang Y."/>
            <person name="Zou Q.-H."/>
            <person name="Chen F."/>
            <person name="Guo J.-T."/>
            <person name="Peng Y.-H."/>
            <person name="Jin Y."/>
            <person name="Li Y.-G."/>
            <person name="Hu S.-N."/>
            <person name="Johnston R.N."/>
            <person name="Liu G.-R."/>
            <person name="Liu S.-L."/>
        </authorList>
    </citation>
    <scope>NUCLEOTIDE SEQUENCE [LARGE SCALE GENOMIC DNA]</scope>
    <source>
        <strain>RKS4594</strain>
    </source>
</reference>
<evidence type="ECO:0000255" key="1">
    <source>
        <dbReference type="HAMAP-Rule" id="MF_00152"/>
    </source>
</evidence>
<dbReference type="EC" id="3.1.21.2" evidence="1"/>
<dbReference type="EMBL" id="CP000857">
    <property type="protein sequence ID" value="ACN45656.1"/>
    <property type="molecule type" value="Genomic_DNA"/>
</dbReference>
<dbReference type="RefSeq" id="WP_000873921.1">
    <property type="nucleotide sequence ID" value="NC_012125.1"/>
</dbReference>
<dbReference type="SMR" id="C0Q0T7"/>
<dbReference type="KEGG" id="sei:SPC_1498"/>
<dbReference type="HOGENOM" id="CLU_025885_0_4_6"/>
<dbReference type="Proteomes" id="UP000001599">
    <property type="component" value="Chromosome"/>
</dbReference>
<dbReference type="GO" id="GO:0008833">
    <property type="term" value="F:deoxyribonuclease IV (phage-T4-induced) activity"/>
    <property type="evidence" value="ECO:0007669"/>
    <property type="project" value="UniProtKB-UniRule"/>
</dbReference>
<dbReference type="GO" id="GO:0003677">
    <property type="term" value="F:DNA binding"/>
    <property type="evidence" value="ECO:0007669"/>
    <property type="project" value="InterPro"/>
</dbReference>
<dbReference type="GO" id="GO:0003906">
    <property type="term" value="F:DNA-(apurinic or apyrimidinic site) endonuclease activity"/>
    <property type="evidence" value="ECO:0007669"/>
    <property type="project" value="TreeGrafter"/>
</dbReference>
<dbReference type="GO" id="GO:0008081">
    <property type="term" value="F:phosphoric diester hydrolase activity"/>
    <property type="evidence" value="ECO:0007669"/>
    <property type="project" value="TreeGrafter"/>
</dbReference>
<dbReference type="GO" id="GO:0008270">
    <property type="term" value="F:zinc ion binding"/>
    <property type="evidence" value="ECO:0007669"/>
    <property type="project" value="UniProtKB-UniRule"/>
</dbReference>
<dbReference type="GO" id="GO:0006284">
    <property type="term" value="P:base-excision repair"/>
    <property type="evidence" value="ECO:0007669"/>
    <property type="project" value="TreeGrafter"/>
</dbReference>
<dbReference type="CDD" id="cd00019">
    <property type="entry name" value="AP2Ec"/>
    <property type="match status" value="1"/>
</dbReference>
<dbReference type="FunFam" id="3.20.20.150:FF:000001">
    <property type="entry name" value="Probable endonuclease 4"/>
    <property type="match status" value="1"/>
</dbReference>
<dbReference type="Gene3D" id="3.20.20.150">
    <property type="entry name" value="Divalent-metal-dependent TIM barrel enzymes"/>
    <property type="match status" value="1"/>
</dbReference>
<dbReference type="HAMAP" id="MF_00152">
    <property type="entry name" value="Nfo"/>
    <property type="match status" value="1"/>
</dbReference>
<dbReference type="InterPro" id="IPR001719">
    <property type="entry name" value="AP_endonuc_2"/>
</dbReference>
<dbReference type="InterPro" id="IPR018246">
    <property type="entry name" value="AP_endonuc_F2_Zn_BS"/>
</dbReference>
<dbReference type="InterPro" id="IPR036237">
    <property type="entry name" value="Xyl_isomerase-like_sf"/>
</dbReference>
<dbReference type="InterPro" id="IPR013022">
    <property type="entry name" value="Xyl_isomerase-like_TIM-brl"/>
</dbReference>
<dbReference type="NCBIfam" id="TIGR00587">
    <property type="entry name" value="nfo"/>
    <property type="match status" value="1"/>
</dbReference>
<dbReference type="NCBIfam" id="NF002199">
    <property type="entry name" value="PRK01060.1-4"/>
    <property type="match status" value="1"/>
</dbReference>
<dbReference type="PANTHER" id="PTHR21445:SF0">
    <property type="entry name" value="APURINIC-APYRIMIDINIC ENDONUCLEASE"/>
    <property type="match status" value="1"/>
</dbReference>
<dbReference type="PANTHER" id="PTHR21445">
    <property type="entry name" value="ENDONUCLEASE IV ENDODEOXYRIBONUCLEASE IV"/>
    <property type="match status" value="1"/>
</dbReference>
<dbReference type="Pfam" id="PF01261">
    <property type="entry name" value="AP_endonuc_2"/>
    <property type="match status" value="1"/>
</dbReference>
<dbReference type="SMART" id="SM00518">
    <property type="entry name" value="AP2Ec"/>
    <property type="match status" value="1"/>
</dbReference>
<dbReference type="SUPFAM" id="SSF51658">
    <property type="entry name" value="Xylose isomerase-like"/>
    <property type="match status" value="1"/>
</dbReference>
<dbReference type="PROSITE" id="PS00729">
    <property type="entry name" value="AP_NUCLEASE_F2_1"/>
    <property type="match status" value="1"/>
</dbReference>
<dbReference type="PROSITE" id="PS00730">
    <property type="entry name" value="AP_NUCLEASE_F2_2"/>
    <property type="match status" value="1"/>
</dbReference>
<dbReference type="PROSITE" id="PS00731">
    <property type="entry name" value="AP_NUCLEASE_F2_3"/>
    <property type="match status" value="1"/>
</dbReference>
<dbReference type="PROSITE" id="PS51432">
    <property type="entry name" value="AP_NUCLEASE_F2_4"/>
    <property type="match status" value="1"/>
</dbReference>
<gene>
    <name evidence="1" type="primary">nfo</name>
    <name type="ordered locus">SPC_1498</name>
</gene>
<comment type="function">
    <text evidence="1">Endonuclease IV plays a role in DNA repair. It cleaves phosphodiester bonds at apurinic or apyrimidinic (AP) sites, generating a 3'-hydroxyl group and a 5'-terminal sugar phosphate.</text>
</comment>
<comment type="catalytic activity">
    <reaction evidence="1">
        <text>Endonucleolytic cleavage to 5'-phosphooligonucleotide end-products.</text>
        <dbReference type="EC" id="3.1.21.2"/>
    </reaction>
</comment>
<comment type="cofactor">
    <cofactor evidence="1">
        <name>Zn(2+)</name>
        <dbReference type="ChEBI" id="CHEBI:29105"/>
    </cofactor>
    <text evidence="1">Binds 3 Zn(2+) ions.</text>
</comment>
<comment type="similarity">
    <text evidence="1">Belongs to the AP endonuclease 2 family.</text>
</comment>
<feature type="chain" id="PRO_1000123336" description="Probable endonuclease 4">
    <location>
        <begin position="1"/>
        <end position="285"/>
    </location>
</feature>
<feature type="binding site" evidence="1">
    <location>
        <position position="69"/>
    </location>
    <ligand>
        <name>Zn(2+)</name>
        <dbReference type="ChEBI" id="CHEBI:29105"/>
        <label>1</label>
    </ligand>
</feature>
<feature type="binding site" evidence="1">
    <location>
        <position position="109"/>
    </location>
    <ligand>
        <name>Zn(2+)</name>
        <dbReference type="ChEBI" id="CHEBI:29105"/>
        <label>1</label>
    </ligand>
</feature>
<feature type="binding site" evidence="1">
    <location>
        <position position="145"/>
    </location>
    <ligand>
        <name>Zn(2+)</name>
        <dbReference type="ChEBI" id="CHEBI:29105"/>
        <label>1</label>
    </ligand>
</feature>
<feature type="binding site" evidence="1">
    <location>
        <position position="145"/>
    </location>
    <ligand>
        <name>Zn(2+)</name>
        <dbReference type="ChEBI" id="CHEBI:29105"/>
        <label>2</label>
    </ligand>
</feature>
<feature type="binding site" evidence="1">
    <location>
        <position position="179"/>
    </location>
    <ligand>
        <name>Zn(2+)</name>
        <dbReference type="ChEBI" id="CHEBI:29105"/>
        <label>2</label>
    </ligand>
</feature>
<feature type="binding site" evidence="1">
    <location>
        <position position="182"/>
    </location>
    <ligand>
        <name>Zn(2+)</name>
        <dbReference type="ChEBI" id="CHEBI:29105"/>
        <label>3</label>
    </ligand>
</feature>
<feature type="binding site" evidence="1">
    <location>
        <position position="216"/>
    </location>
    <ligand>
        <name>Zn(2+)</name>
        <dbReference type="ChEBI" id="CHEBI:29105"/>
        <label>2</label>
    </ligand>
</feature>
<feature type="binding site" evidence="1">
    <location>
        <position position="229"/>
    </location>
    <ligand>
        <name>Zn(2+)</name>
        <dbReference type="ChEBI" id="CHEBI:29105"/>
        <label>3</label>
    </ligand>
</feature>
<feature type="binding site" evidence="1">
    <location>
        <position position="231"/>
    </location>
    <ligand>
        <name>Zn(2+)</name>
        <dbReference type="ChEBI" id="CHEBI:29105"/>
        <label>3</label>
    </ligand>
</feature>
<feature type="binding site" evidence="1">
    <location>
        <position position="261"/>
    </location>
    <ligand>
        <name>Zn(2+)</name>
        <dbReference type="ChEBI" id="CHEBI:29105"/>
        <label>2</label>
    </ligand>
</feature>
<accession>C0Q0T7</accession>
<organism>
    <name type="scientific">Salmonella paratyphi C (strain RKS4594)</name>
    <dbReference type="NCBI Taxonomy" id="476213"/>
    <lineage>
        <taxon>Bacteria</taxon>
        <taxon>Pseudomonadati</taxon>
        <taxon>Pseudomonadota</taxon>
        <taxon>Gammaproteobacteria</taxon>
        <taxon>Enterobacterales</taxon>
        <taxon>Enterobacteriaceae</taxon>
        <taxon>Salmonella</taxon>
    </lineage>
</organism>
<name>END4_SALPC</name>
<sequence length="285" mass="31238">MKYIGAHVSAAGGLANAPARAAEIVATAFALFTKNQRQWRAAPLTPQVIDDFKIACEKYHFSAAQILPHDSYLINLGHPVSEALEKSRDAFLDEMQRCEQLGLTLLNFHPGSHLMQIAQEDCLARIAESINIALAQTEGVTAVIENTAGQGSNLGFEFEQLAAIIDGVEDKSRVGVCIDTCHAFAAGYDLRTPEACEKTFAEFGKIVGFQYLRGMHLNDAKSAFGSRVDRHHSLGEGNIGHDAFRWIMQDGRFDGIPLILETINPDIWAEEIAWLKAQQIAEAMA</sequence>
<protein>
    <recommendedName>
        <fullName evidence="1">Probable endonuclease 4</fullName>
        <ecNumber evidence="1">3.1.21.2</ecNumber>
    </recommendedName>
    <alternativeName>
        <fullName evidence="1">Endodeoxyribonuclease IV</fullName>
    </alternativeName>
    <alternativeName>
        <fullName evidence="1">Endonuclease IV</fullName>
    </alternativeName>
</protein>